<evidence type="ECO:0000250" key="1"/>
<evidence type="ECO:0000255" key="2"/>
<evidence type="ECO:0000305" key="3"/>
<feature type="signal peptide" evidence="2">
    <location>
        <begin position="1"/>
        <end position="32"/>
    </location>
</feature>
<feature type="chain" id="PRO_0000032863" description="Extracellular superoxide dismutase [Cu-Zn]">
    <location>
        <begin position="33"/>
        <end position="183"/>
    </location>
</feature>
<feature type="binding site" evidence="1">
    <location>
        <position position="77"/>
    </location>
    <ligand>
        <name>Cu cation</name>
        <dbReference type="ChEBI" id="CHEBI:23378"/>
        <note>catalytic</note>
    </ligand>
</feature>
<feature type="binding site" evidence="1">
    <location>
        <position position="79"/>
    </location>
    <ligand>
        <name>Cu cation</name>
        <dbReference type="ChEBI" id="CHEBI:23378"/>
        <note>catalytic</note>
    </ligand>
</feature>
<feature type="binding site" evidence="1">
    <location>
        <position position="94"/>
    </location>
    <ligand>
        <name>Cu cation</name>
        <dbReference type="ChEBI" id="CHEBI:23378"/>
        <note>catalytic</note>
    </ligand>
</feature>
<feature type="binding site" evidence="1">
    <location>
        <position position="94"/>
    </location>
    <ligand>
        <name>Zn(2+)</name>
        <dbReference type="ChEBI" id="CHEBI:29105"/>
        <note>structural</note>
    </ligand>
</feature>
<feature type="binding site" evidence="1">
    <location>
        <position position="102"/>
    </location>
    <ligand>
        <name>Zn(2+)</name>
        <dbReference type="ChEBI" id="CHEBI:29105"/>
        <note>structural</note>
    </ligand>
</feature>
<feature type="binding site" evidence="1">
    <location>
        <position position="111"/>
    </location>
    <ligand>
        <name>Zn(2+)</name>
        <dbReference type="ChEBI" id="CHEBI:29105"/>
        <note>structural</note>
    </ligand>
</feature>
<feature type="binding site" evidence="1">
    <location>
        <position position="114"/>
    </location>
    <ligand>
        <name>Zn(2+)</name>
        <dbReference type="ChEBI" id="CHEBI:29105"/>
        <note>structural</note>
    </ligand>
</feature>
<feature type="binding site" evidence="1">
    <location>
        <position position="151"/>
    </location>
    <ligand>
        <name>Cu cation</name>
        <dbReference type="ChEBI" id="CHEBI:23378"/>
        <note>catalytic</note>
    </ligand>
</feature>
<feature type="glycosylation site" description="N-linked (GlcNAc...) asparagine" evidence="2">
    <location>
        <position position="63"/>
    </location>
</feature>
<feature type="disulfide bond" evidence="1">
    <location>
        <begin position="88"/>
        <end position="177"/>
    </location>
</feature>
<comment type="function">
    <text>Destroys radicals which are normally produced within the cells and which are toxic to biological systems.</text>
</comment>
<comment type="catalytic activity">
    <reaction>
        <text>2 superoxide + 2 H(+) = H2O2 + O2</text>
        <dbReference type="Rhea" id="RHEA:20696"/>
        <dbReference type="ChEBI" id="CHEBI:15378"/>
        <dbReference type="ChEBI" id="CHEBI:15379"/>
        <dbReference type="ChEBI" id="CHEBI:16240"/>
        <dbReference type="ChEBI" id="CHEBI:18421"/>
        <dbReference type="EC" id="1.15.1.1"/>
    </reaction>
</comment>
<comment type="cofactor">
    <cofactor evidence="1">
        <name>Cu cation</name>
        <dbReference type="ChEBI" id="CHEBI:23378"/>
    </cofactor>
    <text evidence="1">Binds 1 copper ion per subunit.</text>
</comment>
<comment type="cofactor">
    <cofactor evidence="1">
        <name>Zn(2+)</name>
        <dbReference type="ChEBI" id="CHEBI:29105"/>
    </cofactor>
    <text evidence="1">Binds 1 zinc ion per subunit.</text>
</comment>
<comment type="subcellular location">
    <subcellularLocation>
        <location>Secreted</location>
        <location>Extracellular space</location>
    </subcellularLocation>
</comment>
<comment type="similarity">
    <text evidence="3">Belongs to the Cu-Zn superoxide dismutase family.</text>
</comment>
<name>SODE_HAECO</name>
<sequence>MTMLQQILLISVIIGTVHVHEVDCANEVLKARAYIFEAVKGGNPAKTVGIIDLVQTGTLVKMNGSVSGLQPGLHGFHIHEKGDLGNGCLAAGAHFNPHKMMHGAPEDSNRHVGDLGNIETPKTGDTPILISDSVISLTGQHNVIGRAIVIHADMDDLGRGTSELSKTTGNAGARVACGVIGIL</sequence>
<organism>
    <name type="scientific">Haemonchus contortus</name>
    <name type="common">Barber pole worm</name>
    <dbReference type="NCBI Taxonomy" id="6289"/>
    <lineage>
        <taxon>Eukaryota</taxon>
        <taxon>Metazoa</taxon>
        <taxon>Ecdysozoa</taxon>
        <taxon>Nematoda</taxon>
        <taxon>Chromadorea</taxon>
        <taxon>Rhabditida</taxon>
        <taxon>Rhabditina</taxon>
        <taxon>Rhabditomorpha</taxon>
        <taxon>Strongyloidea</taxon>
        <taxon>Trichostrongylidae</taxon>
        <taxon>Haemonchus</taxon>
    </lineage>
</organism>
<reference key="1">
    <citation type="journal article" date="1998" name="Parasitology">
        <title>Extracellular and cytoplasmic Cu/Zn superoxide dismutases from Haemonchus contortus.</title>
        <authorList>
            <person name="Liddell S."/>
            <person name="Knox D.P."/>
        </authorList>
    </citation>
    <scope>NUCLEOTIDE SEQUENCE [MRNA]</scope>
    <source>
        <strain>Moredun</strain>
    </source>
</reference>
<keyword id="KW-0049">Antioxidant</keyword>
<keyword id="KW-0186">Copper</keyword>
<keyword id="KW-1015">Disulfide bond</keyword>
<keyword id="KW-0325">Glycoprotein</keyword>
<keyword id="KW-0479">Metal-binding</keyword>
<keyword id="KW-0560">Oxidoreductase</keyword>
<keyword id="KW-0964">Secreted</keyword>
<keyword id="KW-0732">Signal</keyword>
<keyword id="KW-0862">Zinc</keyword>
<protein>
    <recommendedName>
        <fullName>Extracellular superoxide dismutase [Cu-Zn]</fullName>
        <shortName>EC-SOD</shortName>
        <ecNumber>1.15.1.1</ecNumber>
    </recommendedName>
</protein>
<gene>
    <name type="primary">SOD</name>
</gene>
<accession>P51547</accession>
<proteinExistence type="evidence at transcript level"/>
<dbReference type="EC" id="1.15.1.1"/>
<dbReference type="EMBL" id="Z69630">
    <property type="protein sequence ID" value="CAA93449.1"/>
    <property type="molecule type" value="mRNA"/>
</dbReference>
<dbReference type="SMR" id="P51547"/>
<dbReference type="GlyCosmos" id="P51547">
    <property type="glycosylation" value="1 site, No reported glycans"/>
</dbReference>
<dbReference type="Proteomes" id="UP000025227">
    <property type="component" value="Unplaced"/>
</dbReference>
<dbReference type="GO" id="GO:0005576">
    <property type="term" value="C:extracellular region"/>
    <property type="evidence" value="ECO:0007669"/>
    <property type="project" value="UniProtKB-SubCell"/>
</dbReference>
<dbReference type="GO" id="GO:0005507">
    <property type="term" value="F:copper ion binding"/>
    <property type="evidence" value="ECO:0007669"/>
    <property type="project" value="InterPro"/>
</dbReference>
<dbReference type="GO" id="GO:0004784">
    <property type="term" value="F:superoxide dismutase activity"/>
    <property type="evidence" value="ECO:0007669"/>
    <property type="project" value="UniProtKB-EC"/>
</dbReference>
<dbReference type="CDD" id="cd00305">
    <property type="entry name" value="Cu-Zn_Superoxide_Dismutase"/>
    <property type="match status" value="1"/>
</dbReference>
<dbReference type="FunFam" id="2.60.40.200:FF:000004">
    <property type="entry name" value="Copper chaperone for superoxide dismutase"/>
    <property type="match status" value="1"/>
</dbReference>
<dbReference type="Gene3D" id="2.60.40.200">
    <property type="entry name" value="Superoxide dismutase, copper/zinc binding domain"/>
    <property type="match status" value="1"/>
</dbReference>
<dbReference type="InterPro" id="IPR036423">
    <property type="entry name" value="SOD-like_Cu/Zn_dom_sf"/>
</dbReference>
<dbReference type="InterPro" id="IPR024134">
    <property type="entry name" value="SOD_Cu/Zn_/chaperone"/>
</dbReference>
<dbReference type="InterPro" id="IPR018152">
    <property type="entry name" value="SOD_Cu/Zn_BS"/>
</dbReference>
<dbReference type="InterPro" id="IPR001424">
    <property type="entry name" value="SOD_Cu_Zn_dom"/>
</dbReference>
<dbReference type="PANTHER" id="PTHR10003">
    <property type="entry name" value="SUPEROXIDE DISMUTASE CU-ZN -RELATED"/>
    <property type="match status" value="1"/>
</dbReference>
<dbReference type="Pfam" id="PF00080">
    <property type="entry name" value="Sod_Cu"/>
    <property type="match status" value="1"/>
</dbReference>
<dbReference type="PRINTS" id="PR00068">
    <property type="entry name" value="CUZNDISMTASE"/>
</dbReference>
<dbReference type="SUPFAM" id="SSF49329">
    <property type="entry name" value="Cu,Zn superoxide dismutase-like"/>
    <property type="match status" value="1"/>
</dbReference>
<dbReference type="PROSITE" id="PS00087">
    <property type="entry name" value="SOD_CU_ZN_1"/>
    <property type="match status" value="1"/>
</dbReference>
<dbReference type="PROSITE" id="PS00332">
    <property type="entry name" value="SOD_CU_ZN_2"/>
    <property type="match status" value="1"/>
</dbReference>